<keyword id="KW-1185">Reference proteome</keyword>
<keyword id="KW-0677">Repeat</keyword>
<gene>
    <name type="ordered locus">At1g13800</name>
    <name type="ORF">F16A14.3</name>
</gene>
<reference key="1">
    <citation type="journal article" date="2000" name="Nature">
        <title>Sequence and analysis of chromosome 1 of the plant Arabidopsis thaliana.</title>
        <authorList>
            <person name="Theologis A."/>
            <person name="Ecker J.R."/>
            <person name="Palm C.J."/>
            <person name="Federspiel N.A."/>
            <person name="Kaul S."/>
            <person name="White O."/>
            <person name="Alonso J."/>
            <person name="Altafi H."/>
            <person name="Araujo R."/>
            <person name="Bowman C.L."/>
            <person name="Brooks S.Y."/>
            <person name="Buehler E."/>
            <person name="Chan A."/>
            <person name="Chao Q."/>
            <person name="Chen H."/>
            <person name="Cheuk R.F."/>
            <person name="Chin C.W."/>
            <person name="Chung M.K."/>
            <person name="Conn L."/>
            <person name="Conway A.B."/>
            <person name="Conway A.R."/>
            <person name="Creasy T.H."/>
            <person name="Dewar K."/>
            <person name="Dunn P."/>
            <person name="Etgu P."/>
            <person name="Feldblyum T.V."/>
            <person name="Feng J.-D."/>
            <person name="Fong B."/>
            <person name="Fujii C.Y."/>
            <person name="Gill J.E."/>
            <person name="Goldsmith A.D."/>
            <person name="Haas B."/>
            <person name="Hansen N.F."/>
            <person name="Hughes B."/>
            <person name="Huizar L."/>
            <person name="Hunter J.L."/>
            <person name="Jenkins J."/>
            <person name="Johnson-Hopson C."/>
            <person name="Khan S."/>
            <person name="Khaykin E."/>
            <person name="Kim C.J."/>
            <person name="Koo H.L."/>
            <person name="Kremenetskaia I."/>
            <person name="Kurtz D.B."/>
            <person name="Kwan A."/>
            <person name="Lam B."/>
            <person name="Langin-Hooper S."/>
            <person name="Lee A."/>
            <person name="Lee J.M."/>
            <person name="Lenz C.A."/>
            <person name="Li J.H."/>
            <person name="Li Y.-P."/>
            <person name="Lin X."/>
            <person name="Liu S.X."/>
            <person name="Liu Z.A."/>
            <person name="Luros J.S."/>
            <person name="Maiti R."/>
            <person name="Marziali A."/>
            <person name="Militscher J."/>
            <person name="Miranda M."/>
            <person name="Nguyen M."/>
            <person name="Nierman W.C."/>
            <person name="Osborne B.I."/>
            <person name="Pai G."/>
            <person name="Peterson J."/>
            <person name="Pham P.K."/>
            <person name="Rizzo M."/>
            <person name="Rooney T."/>
            <person name="Rowley D."/>
            <person name="Sakano H."/>
            <person name="Salzberg S.L."/>
            <person name="Schwartz J.R."/>
            <person name="Shinn P."/>
            <person name="Southwick A.M."/>
            <person name="Sun H."/>
            <person name="Tallon L.J."/>
            <person name="Tambunga G."/>
            <person name="Toriumi M.J."/>
            <person name="Town C.D."/>
            <person name="Utterback T."/>
            <person name="Van Aken S."/>
            <person name="Vaysberg M."/>
            <person name="Vysotskaia V.S."/>
            <person name="Walker M."/>
            <person name="Wu D."/>
            <person name="Yu G."/>
            <person name="Fraser C.M."/>
            <person name="Venter J.C."/>
            <person name="Davis R.W."/>
        </authorList>
    </citation>
    <scope>NUCLEOTIDE SEQUENCE [LARGE SCALE GENOMIC DNA]</scope>
    <source>
        <strain>cv. Columbia</strain>
    </source>
</reference>
<reference key="2">
    <citation type="journal article" date="2017" name="Plant J.">
        <title>Araport11: a complete reannotation of the Arabidopsis thaliana reference genome.</title>
        <authorList>
            <person name="Cheng C.Y."/>
            <person name="Krishnakumar V."/>
            <person name="Chan A.P."/>
            <person name="Thibaud-Nissen F."/>
            <person name="Schobel S."/>
            <person name="Town C.D."/>
        </authorList>
    </citation>
    <scope>GENOME REANNOTATION</scope>
    <source>
        <strain>cv. Columbia</strain>
    </source>
</reference>
<reference key="3">
    <citation type="journal article" date="2004" name="Plant Cell">
        <title>Genome-wide analysis of Arabidopsis pentatricopeptide repeat proteins reveals their essential role in organelle biogenesis.</title>
        <authorList>
            <person name="Lurin C."/>
            <person name="Andres C."/>
            <person name="Aubourg S."/>
            <person name="Bellaoui M."/>
            <person name="Bitton F."/>
            <person name="Bruyere C."/>
            <person name="Caboche M."/>
            <person name="Debast C."/>
            <person name="Gualberto J."/>
            <person name="Hoffmann B."/>
            <person name="Lecharny A."/>
            <person name="Le Ret M."/>
            <person name="Martin-Magniette M.-L."/>
            <person name="Mireau H."/>
            <person name="Peeters N."/>
            <person name="Renou J.-P."/>
            <person name="Szurek B."/>
            <person name="Taconnat L."/>
            <person name="Small I."/>
        </authorList>
    </citation>
    <scope>GENE FAMILY</scope>
</reference>
<evidence type="ECO:0000305" key="1"/>
<dbReference type="EMBL" id="AC068197">
    <property type="protein sequence ID" value="AAF79418.1"/>
    <property type="molecule type" value="Genomic_DNA"/>
</dbReference>
<dbReference type="EMBL" id="CP002684">
    <property type="protein sequence ID" value="AEE29070.1"/>
    <property type="molecule type" value="Genomic_DNA"/>
</dbReference>
<dbReference type="EMBL" id="CP002684">
    <property type="protein sequence ID" value="ANM59799.1"/>
    <property type="molecule type" value="Genomic_DNA"/>
</dbReference>
<dbReference type="RefSeq" id="NP_001318997.1">
    <property type="nucleotide sequence ID" value="NM_001332089.1"/>
</dbReference>
<dbReference type="RefSeq" id="NP_172835.1">
    <property type="nucleotide sequence ID" value="NM_101248.2"/>
</dbReference>
<dbReference type="SMR" id="Q9LMH5"/>
<dbReference type="FunCoup" id="Q9LMH5">
    <property type="interactions" value="501"/>
</dbReference>
<dbReference type="STRING" id="3702.Q9LMH5"/>
<dbReference type="PaxDb" id="3702-AT1G13800.1"/>
<dbReference type="ProteomicsDB" id="226290"/>
<dbReference type="EnsemblPlants" id="AT1G13800.1">
    <property type="protein sequence ID" value="AT1G13800.1"/>
    <property type="gene ID" value="AT1G13800"/>
</dbReference>
<dbReference type="EnsemblPlants" id="AT1G13800.2">
    <property type="protein sequence ID" value="AT1G13800.2"/>
    <property type="gene ID" value="AT1G13800"/>
</dbReference>
<dbReference type="GeneID" id="837941"/>
<dbReference type="Gramene" id="AT1G13800.1">
    <property type="protein sequence ID" value="AT1G13800.1"/>
    <property type="gene ID" value="AT1G13800"/>
</dbReference>
<dbReference type="Gramene" id="AT1G13800.2">
    <property type="protein sequence ID" value="AT1G13800.2"/>
    <property type="gene ID" value="AT1G13800"/>
</dbReference>
<dbReference type="KEGG" id="ath:AT1G13800"/>
<dbReference type="Araport" id="AT1G13800"/>
<dbReference type="TAIR" id="AT1G13800">
    <property type="gene designation" value="FAC19"/>
</dbReference>
<dbReference type="eggNOG" id="KOG4197">
    <property type="taxonomic scope" value="Eukaryota"/>
</dbReference>
<dbReference type="HOGENOM" id="CLU_002706_49_9_1"/>
<dbReference type="InParanoid" id="Q9LMH5"/>
<dbReference type="OMA" id="YTIMINT"/>
<dbReference type="OrthoDB" id="185373at2759"/>
<dbReference type="PhylomeDB" id="Q9LMH5"/>
<dbReference type="PRO" id="PR:Q9LMH5"/>
<dbReference type="Proteomes" id="UP000006548">
    <property type="component" value="Chromosome 1"/>
</dbReference>
<dbReference type="ExpressionAtlas" id="Q9LMH5">
    <property type="expression patterns" value="baseline and differential"/>
</dbReference>
<dbReference type="GO" id="GO:0009793">
    <property type="term" value="P:embryo development ending in seed dormancy"/>
    <property type="evidence" value="ECO:0000315"/>
    <property type="project" value="TAIR"/>
</dbReference>
<dbReference type="Gene3D" id="1.25.40.10">
    <property type="entry name" value="Tetratricopeptide repeat domain"/>
    <property type="match status" value="6"/>
</dbReference>
<dbReference type="InterPro" id="IPR002885">
    <property type="entry name" value="Pentatricopeptide_rpt"/>
</dbReference>
<dbReference type="InterPro" id="IPR011990">
    <property type="entry name" value="TPR-like_helical_dom_sf"/>
</dbReference>
<dbReference type="NCBIfam" id="TIGR00756">
    <property type="entry name" value="PPR"/>
    <property type="match status" value="12"/>
</dbReference>
<dbReference type="PANTHER" id="PTHR47938:SF35">
    <property type="entry name" value="PENTATRICOPEPTIDE REPEAT-CONTAINING PROTEIN 4, MITOCHONDRIAL-RELATED"/>
    <property type="match status" value="1"/>
</dbReference>
<dbReference type="PANTHER" id="PTHR47938">
    <property type="entry name" value="RESPIRATORY COMPLEX I CHAPERONE (CIA84), PUTATIVE (AFU_ORTHOLOGUE AFUA_2G06020)-RELATED"/>
    <property type="match status" value="1"/>
</dbReference>
<dbReference type="Pfam" id="PF01535">
    <property type="entry name" value="PPR"/>
    <property type="match status" value="3"/>
</dbReference>
<dbReference type="Pfam" id="PF12854">
    <property type="entry name" value="PPR_1"/>
    <property type="match status" value="1"/>
</dbReference>
<dbReference type="Pfam" id="PF13041">
    <property type="entry name" value="PPR_2"/>
    <property type="match status" value="5"/>
</dbReference>
<dbReference type="Pfam" id="PF13812">
    <property type="entry name" value="PPR_3"/>
    <property type="match status" value="1"/>
</dbReference>
<dbReference type="SUPFAM" id="SSF48452">
    <property type="entry name" value="TPR-like"/>
    <property type="match status" value="1"/>
</dbReference>
<dbReference type="PROSITE" id="PS51375">
    <property type="entry name" value="PPR"/>
    <property type="match status" value="17"/>
</dbReference>
<sequence length="883" mass="100519">MRVFPIPLLSHVRGLIRQGPSSRFYVVPALARTNLTISHSEQVKEGTFDYKALELNDIGVLRVLNSMKDDPYLALSFLKRIEGNVTLPSVQAYATVIRIVCGWGLDKKLDTFLFELVRRGDEGRGFSVMDLLKAIGEMEQSLVLLIRVSTALVKAYANLDMFDEAIDIFFRAYYSLGRAPDIKALNFLISRMIASGRSDMVVGFFWEIERLGLDADAHTYVLVVQALWRNDDKEELEKLLSRLLISETRNPCVFYLNFIEGLCLNQMTDIAYFLLQPLRDANILVDKSDLGIAYRKVVRGLCYEMRIEDAESVVLDMEKHGIDPDVYVYSAIIEGHRKNMNIPKAVDVFNKMLKKRKRINCVIVSSILQCYCQMGNFSEAYDLFKEFRETNISLDRVCYNVAFDALGKLGKVEEAIELFREMTGKGIAPDVINYTTLIGGCCLQGKCSDAFDLMIEMDGTGKTPDIVIYNVLAGGLATNGLAQEAFETLKMMENRGVKPTYVTHNMVIEGLIDAGELDKAEAFYESLEHKSRENDASMVKGFCAAGCLDHAFERFIRLEFPLPKSVYFTLFTSLCAEKDYISKAQDLLDRMWKLGVEPEKSMYGKLIGAWCRVNNVRKAREFFEILVTKKIVPDLFTYTIMINTYCRLNEPKQAYALFEDMKRRDVKPDVVTYSVLLNSDPELDMKREMEAFDVIPDVVYYTIMINRYCHLNDLKKVYALFKDMKRREIVPDVVTYTVLLKNKPERNLSREMKAFDVKPDVFYYTVLIDWQCKIGDLGEAKRIFDQMIESGVDPDAAPYTALIACCCKMGYLKEAKMIFDRMIESGVKPDVVPYTALIAGCCRNGFVLKAVKLVKEMLEKGIKPTKASLSAVHYAKLKAKGLR</sequence>
<comment type="similarity">
    <text evidence="1">Belongs to the PPR family. P subfamily.</text>
</comment>
<comment type="online information" name="Pentatricopeptide repeat proteins">
    <link uri="https://ppr.plantenergy.uwa.edu.au"/>
</comment>
<proteinExistence type="inferred from homology"/>
<name>PPR42_ARATH</name>
<feature type="chain" id="PRO_0000342783" description="Putative pentatricopeptide repeat-containing protein At1g13800">
    <location>
        <begin position="1"/>
        <end position="883"/>
    </location>
</feature>
<feature type="repeat" description="PPR 1">
    <location>
        <begin position="145"/>
        <end position="180"/>
    </location>
</feature>
<feature type="repeat" description="PPR 2">
    <location>
        <begin position="181"/>
        <end position="215"/>
    </location>
</feature>
<feature type="repeat" description="PPR 3">
    <location>
        <begin position="216"/>
        <end position="251"/>
    </location>
</feature>
<feature type="repeat" description="PPR 4">
    <location>
        <begin position="253"/>
        <end position="285"/>
    </location>
</feature>
<feature type="repeat" description="PPR 5">
    <location>
        <begin position="290"/>
        <end position="324"/>
    </location>
</feature>
<feature type="repeat" description="PPR 6">
    <location>
        <begin position="325"/>
        <end position="359"/>
    </location>
</feature>
<feature type="repeat" description="PPR 7">
    <location>
        <begin position="360"/>
        <end position="394"/>
    </location>
</feature>
<feature type="repeat" description="PPR 8">
    <location>
        <begin position="395"/>
        <end position="429"/>
    </location>
</feature>
<feature type="repeat" description="PPR 9">
    <location>
        <begin position="430"/>
        <end position="464"/>
    </location>
</feature>
<feature type="repeat" description="PPR 10">
    <location>
        <begin position="465"/>
        <end position="499"/>
    </location>
</feature>
<feature type="repeat" description="PPR 11">
    <location>
        <begin position="500"/>
        <end position="534"/>
    </location>
</feature>
<feature type="repeat" description="PPR 12">
    <location>
        <begin position="537"/>
        <end position="561"/>
    </location>
</feature>
<feature type="repeat" description="PPR 13">
    <location>
        <begin position="563"/>
        <end position="598"/>
    </location>
</feature>
<feature type="repeat" description="PPR 14">
    <location>
        <begin position="599"/>
        <end position="633"/>
    </location>
</feature>
<feature type="repeat" description="PPR 15">
    <location>
        <begin position="634"/>
        <end position="668"/>
    </location>
</feature>
<feature type="repeat" description="PPR 16">
    <location>
        <begin position="697"/>
        <end position="731"/>
    </location>
</feature>
<feature type="repeat" description="PPR 17">
    <location>
        <begin position="760"/>
        <end position="794"/>
    </location>
</feature>
<feature type="repeat" description="PPR 18">
    <location>
        <begin position="795"/>
        <end position="829"/>
    </location>
</feature>
<feature type="repeat" description="PPR 19">
    <location>
        <begin position="830"/>
        <end position="864"/>
    </location>
</feature>
<organism>
    <name type="scientific">Arabidopsis thaliana</name>
    <name type="common">Mouse-ear cress</name>
    <dbReference type="NCBI Taxonomy" id="3702"/>
    <lineage>
        <taxon>Eukaryota</taxon>
        <taxon>Viridiplantae</taxon>
        <taxon>Streptophyta</taxon>
        <taxon>Embryophyta</taxon>
        <taxon>Tracheophyta</taxon>
        <taxon>Spermatophyta</taxon>
        <taxon>Magnoliopsida</taxon>
        <taxon>eudicotyledons</taxon>
        <taxon>Gunneridae</taxon>
        <taxon>Pentapetalae</taxon>
        <taxon>rosids</taxon>
        <taxon>malvids</taxon>
        <taxon>Brassicales</taxon>
        <taxon>Brassicaceae</taxon>
        <taxon>Camelineae</taxon>
        <taxon>Arabidopsis</taxon>
    </lineage>
</organism>
<protein>
    <recommendedName>
        <fullName>Putative pentatricopeptide repeat-containing protein At1g13800</fullName>
    </recommendedName>
</protein>
<accession>Q9LMH5</accession>